<name>ARGR_ECO7I</name>
<protein>
    <recommendedName>
        <fullName evidence="1">Arginine repressor</fullName>
    </recommendedName>
</protein>
<reference key="1">
    <citation type="journal article" date="2009" name="PLoS Genet.">
        <title>Organised genome dynamics in the Escherichia coli species results in highly diverse adaptive paths.</title>
        <authorList>
            <person name="Touchon M."/>
            <person name="Hoede C."/>
            <person name="Tenaillon O."/>
            <person name="Barbe V."/>
            <person name="Baeriswyl S."/>
            <person name="Bidet P."/>
            <person name="Bingen E."/>
            <person name="Bonacorsi S."/>
            <person name="Bouchier C."/>
            <person name="Bouvet O."/>
            <person name="Calteau A."/>
            <person name="Chiapello H."/>
            <person name="Clermont O."/>
            <person name="Cruveiller S."/>
            <person name="Danchin A."/>
            <person name="Diard M."/>
            <person name="Dossat C."/>
            <person name="Karoui M.E."/>
            <person name="Frapy E."/>
            <person name="Garry L."/>
            <person name="Ghigo J.M."/>
            <person name="Gilles A.M."/>
            <person name="Johnson J."/>
            <person name="Le Bouguenec C."/>
            <person name="Lescat M."/>
            <person name="Mangenot S."/>
            <person name="Martinez-Jehanne V."/>
            <person name="Matic I."/>
            <person name="Nassif X."/>
            <person name="Oztas S."/>
            <person name="Petit M.A."/>
            <person name="Pichon C."/>
            <person name="Rouy Z."/>
            <person name="Ruf C.S."/>
            <person name="Schneider D."/>
            <person name="Tourret J."/>
            <person name="Vacherie B."/>
            <person name="Vallenet D."/>
            <person name="Medigue C."/>
            <person name="Rocha E.P.C."/>
            <person name="Denamur E."/>
        </authorList>
    </citation>
    <scope>NUCLEOTIDE SEQUENCE [LARGE SCALE GENOMIC DNA]</scope>
    <source>
        <strain>IAI39 / ExPEC</strain>
    </source>
</reference>
<gene>
    <name evidence="1" type="primary">argR</name>
    <name type="ordered locus">ECIAI39_3728</name>
</gene>
<keyword id="KW-0028">Amino-acid biosynthesis</keyword>
<keyword id="KW-0055">Arginine biosynthesis</keyword>
<keyword id="KW-0963">Cytoplasm</keyword>
<keyword id="KW-0238">DNA-binding</keyword>
<keyword id="KW-0678">Repressor</keyword>
<keyword id="KW-0804">Transcription</keyword>
<keyword id="KW-0805">Transcription regulation</keyword>
<feature type="chain" id="PRO_1000189559" description="Arginine repressor">
    <location>
        <begin position="1"/>
        <end position="156"/>
    </location>
</feature>
<comment type="function">
    <text evidence="1">Regulates arginine biosynthesis genes.</text>
</comment>
<comment type="pathway">
    <text>Amino-acid biosynthesis; L-arginine biosynthesis [regulation].</text>
</comment>
<comment type="subcellular location">
    <subcellularLocation>
        <location evidence="1">Cytoplasm</location>
    </subcellularLocation>
</comment>
<comment type="similarity">
    <text evidence="1">Belongs to the ArgR family.</text>
</comment>
<proteinExistence type="inferred from homology"/>
<dbReference type="EMBL" id="CU928164">
    <property type="protein sequence ID" value="CAR19844.1"/>
    <property type="molecule type" value="Genomic_DNA"/>
</dbReference>
<dbReference type="RefSeq" id="WP_001257846.1">
    <property type="nucleotide sequence ID" value="NC_011750.1"/>
</dbReference>
<dbReference type="RefSeq" id="YP_002409631.1">
    <property type="nucleotide sequence ID" value="NC_011750.1"/>
</dbReference>
<dbReference type="SMR" id="B7NKV0"/>
<dbReference type="STRING" id="585057.ECIAI39_3728"/>
<dbReference type="GeneID" id="93778748"/>
<dbReference type="KEGG" id="ect:ECIAI39_3728"/>
<dbReference type="PATRIC" id="fig|585057.6.peg.3864"/>
<dbReference type="HOGENOM" id="CLU_097103_2_0_6"/>
<dbReference type="UniPathway" id="UPA00068"/>
<dbReference type="Proteomes" id="UP000000749">
    <property type="component" value="Chromosome"/>
</dbReference>
<dbReference type="GO" id="GO:0005737">
    <property type="term" value="C:cytoplasm"/>
    <property type="evidence" value="ECO:0007669"/>
    <property type="project" value="UniProtKB-SubCell"/>
</dbReference>
<dbReference type="GO" id="GO:0034618">
    <property type="term" value="F:arginine binding"/>
    <property type="evidence" value="ECO:0007669"/>
    <property type="project" value="InterPro"/>
</dbReference>
<dbReference type="GO" id="GO:0003677">
    <property type="term" value="F:DNA binding"/>
    <property type="evidence" value="ECO:0007669"/>
    <property type="project" value="UniProtKB-KW"/>
</dbReference>
<dbReference type="GO" id="GO:0003700">
    <property type="term" value="F:DNA-binding transcription factor activity"/>
    <property type="evidence" value="ECO:0007669"/>
    <property type="project" value="UniProtKB-UniRule"/>
</dbReference>
<dbReference type="GO" id="GO:0006526">
    <property type="term" value="P:L-arginine biosynthetic process"/>
    <property type="evidence" value="ECO:0007669"/>
    <property type="project" value="UniProtKB-UniPathway"/>
</dbReference>
<dbReference type="GO" id="GO:0051259">
    <property type="term" value="P:protein complex oligomerization"/>
    <property type="evidence" value="ECO:0007669"/>
    <property type="project" value="InterPro"/>
</dbReference>
<dbReference type="GO" id="GO:1900079">
    <property type="term" value="P:regulation of arginine biosynthetic process"/>
    <property type="evidence" value="ECO:0007669"/>
    <property type="project" value="UniProtKB-UniRule"/>
</dbReference>
<dbReference type="FunFam" id="1.10.10.10:FF:000074">
    <property type="entry name" value="Arginine repressor"/>
    <property type="match status" value="1"/>
</dbReference>
<dbReference type="FunFam" id="3.30.1360.40:FF:000004">
    <property type="entry name" value="Arginine repressor"/>
    <property type="match status" value="1"/>
</dbReference>
<dbReference type="Gene3D" id="3.30.1360.40">
    <property type="match status" value="1"/>
</dbReference>
<dbReference type="Gene3D" id="1.10.10.10">
    <property type="entry name" value="Winged helix-like DNA-binding domain superfamily/Winged helix DNA-binding domain"/>
    <property type="match status" value="1"/>
</dbReference>
<dbReference type="HAMAP" id="MF_00173">
    <property type="entry name" value="Arg_repressor"/>
    <property type="match status" value="1"/>
</dbReference>
<dbReference type="InterPro" id="IPR001669">
    <property type="entry name" value="Arg_repress"/>
</dbReference>
<dbReference type="InterPro" id="IPR020899">
    <property type="entry name" value="Arg_repress_C"/>
</dbReference>
<dbReference type="InterPro" id="IPR036251">
    <property type="entry name" value="Arg_repress_C_sf"/>
</dbReference>
<dbReference type="InterPro" id="IPR020900">
    <property type="entry name" value="Arg_repress_DNA-bd"/>
</dbReference>
<dbReference type="InterPro" id="IPR036388">
    <property type="entry name" value="WH-like_DNA-bd_sf"/>
</dbReference>
<dbReference type="InterPro" id="IPR036390">
    <property type="entry name" value="WH_DNA-bd_sf"/>
</dbReference>
<dbReference type="NCBIfam" id="TIGR01529">
    <property type="entry name" value="argR_whole"/>
    <property type="match status" value="1"/>
</dbReference>
<dbReference type="NCBIfam" id="NF003457">
    <property type="entry name" value="PRK05066.1"/>
    <property type="match status" value="1"/>
</dbReference>
<dbReference type="PANTHER" id="PTHR34471">
    <property type="entry name" value="ARGININE REPRESSOR"/>
    <property type="match status" value="1"/>
</dbReference>
<dbReference type="PANTHER" id="PTHR34471:SF1">
    <property type="entry name" value="ARGININE REPRESSOR"/>
    <property type="match status" value="1"/>
</dbReference>
<dbReference type="Pfam" id="PF01316">
    <property type="entry name" value="Arg_repressor"/>
    <property type="match status" value="1"/>
</dbReference>
<dbReference type="Pfam" id="PF02863">
    <property type="entry name" value="Arg_repressor_C"/>
    <property type="match status" value="1"/>
</dbReference>
<dbReference type="PRINTS" id="PR01467">
    <property type="entry name" value="ARGREPRESSOR"/>
</dbReference>
<dbReference type="SUPFAM" id="SSF55252">
    <property type="entry name" value="C-terminal domain of arginine repressor"/>
    <property type="match status" value="1"/>
</dbReference>
<dbReference type="SUPFAM" id="SSF46785">
    <property type="entry name" value="Winged helix' DNA-binding domain"/>
    <property type="match status" value="1"/>
</dbReference>
<accession>B7NKV0</accession>
<sequence length="156" mass="16995">MRSSAKQEELVKAFKALLKEEKFSSQGEIVAALQEQGFDNINQSKVSRMLTKFGAVRTRNAKMEMVYCLPAELGVPTTSSPLKNLVLDIDYNDAVVVIHTSPGAAQLIARLLDSLGKAEGILGTIAGDDTIFTTPANGFTVKDLYEAILELFDQEL</sequence>
<organism>
    <name type="scientific">Escherichia coli O7:K1 (strain IAI39 / ExPEC)</name>
    <dbReference type="NCBI Taxonomy" id="585057"/>
    <lineage>
        <taxon>Bacteria</taxon>
        <taxon>Pseudomonadati</taxon>
        <taxon>Pseudomonadota</taxon>
        <taxon>Gammaproteobacteria</taxon>
        <taxon>Enterobacterales</taxon>
        <taxon>Enterobacteriaceae</taxon>
        <taxon>Escherichia</taxon>
    </lineage>
</organism>
<evidence type="ECO:0000255" key="1">
    <source>
        <dbReference type="HAMAP-Rule" id="MF_00173"/>
    </source>
</evidence>